<accession>Q53CF3</accession>
<gene>
    <name evidence="1" type="primary">ycf3</name>
</gene>
<proteinExistence type="inferred from homology"/>
<dbReference type="EMBL" id="AY587540">
    <property type="protein sequence ID" value="AAT81155.1"/>
    <property type="molecule type" value="Genomic_DNA"/>
</dbReference>
<dbReference type="RefSeq" id="YP_009177866.1">
    <property type="nucleotide sequence ID" value="NC_028272.1"/>
</dbReference>
<dbReference type="SMR" id="Q53CF3"/>
<dbReference type="GeneID" id="26128304"/>
<dbReference type="GO" id="GO:0009535">
    <property type="term" value="C:chloroplast thylakoid membrane"/>
    <property type="evidence" value="ECO:0007669"/>
    <property type="project" value="UniProtKB-SubCell"/>
</dbReference>
<dbReference type="GO" id="GO:0015979">
    <property type="term" value="P:photosynthesis"/>
    <property type="evidence" value="ECO:0007669"/>
    <property type="project" value="UniProtKB-UniRule"/>
</dbReference>
<dbReference type="FunFam" id="1.25.40.10:FF:000004">
    <property type="entry name" value="Photosystem I assembly protein Ycf3"/>
    <property type="match status" value="1"/>
</dbReference>
<dbReference type="Gene3D" id="1.25.40.10">
    <property type="entry name" value="Tetratricopeptide repeat domain"/>
    <property type="match status" value="1"/>
</dbReference>
<dbReference type="HAMAP" id="MF_00439">
    <property type="entry name" value="Ycf3"/>
    <property type="match status" value="1"/>
</dbReference>
<dbReference type="InterPro" id="IPR022818">
    <property type="entry name" value="PSI_Ycf3_assembly"/>
</dbReference>
<dbReference type="InterPro" id="IPR011990">
    <property type="entry name" value="TPR-like_helical_dom_sf"/>
</dbReference>
<dbReference type="InterPro" id="IPR019734">
    <property type="entry name" value="TPR_rpt"/>
</dbReference>
<dbReference type="InterPro" id="IPR051685">
    <property type="entry name" value="Ycf3/AcsC/BcsC/TPR_MFPF"/>
</dbReference>
<dbReference type="NCBIfam" id="NF002725">
    <property type="entry name" value="PRK02603.1"/>
    <property type="match status" value="1"/>
</dbReference>
<dbReference type="PANTHER" id="PTHR44943">
    <property type="entry name" value="CELLULOSE SYNTHASE OPERON PROTEIN C"/>
    <property type="match status" value="1"/>
</dbReference>
<dbReference type="PANTHER" id="PTHR44943:SF8">
    <property type="entry name" value="TPR REPEAT-CONTAINING PROTEIN MJ0263"/>
    <property type="match status" value="1"/>
</dbReference>
<dbReference type="Pfam" id="PF00515">
    <property type="entry name" value="TPR_1"/>
    <property type="match status" value="1"/>
</dbReference>
<dbReference type="SMART" id="SM00028">
    <property type="entry name" value="TPR"/>
    <property type="match status" value="3"/>
</dbReference>
<dbReference type="SUPFAM" id="SSF48452">
    <property type="entry name" value="TPR-like"/>
    <property type="match status" value="1"/>
</dbReference>
<dbReference type="PROSITE" id="PS50005">
    <property type="entry name" value="TPR"/>
    <property type="match status" value="3"/>
</dbReference>
<dbReference type="PROSITE" id="PS50293">
    <property type="entry name" value="TPR_REGION"/>
    <property type="match status" value="1"/>
</dbReference>
<evidence type="ECO:0000255" key="1">
    <source>
        <dbReference type="HAMAP-Rule" id="MF_00439"/>
    </source>
</evidence>
<name>YCF3_BRAJU</name>
<comment type="function">
    <text evidence="1">Essential for the assembly of the photosystem I (PSI) complex. May act as a chaperone-like factor to guide the assembly of the PSI subunits.</text>
</comment>
<comment type="subcellular location">
    <subcellularLocation>
        <location evidence="1">Plastid</location>
        <location evidence="1">Chloroplast thylakoid membrane</location>
        <topology evidence="1">Peripheral membrane protein</topology>
    </subcellularLocation>
</comment>
<comment type="similarity">
    <text evidence="1">Belongs to the Ycf3 family.</text>
</comment>
<organism>
    <name type="scientific">Brassica juncea</name>
    <name type="common">Indian mustard</name>
    <name type="synonym">Sinapis juncea</name>
    <dbReference type="NCBI Taxonomy" id="3707"/>
    <lineage>
        <taxon>Eukaryota</taxon>
        <taxon>Viridiplantae</taxon>
        <taxon>Streptophyta</taxon>
        <taxon>Embryophyta</taxon>
        <taxon>Tracheophyta</taxon>
        <taxon>Spermatophyta</taxon>
        <taxon>Magnoliopsida</taxon>
        <taxon>eudicotyledons</taxon>
        <taxon>Gunneridae</taxon>
        <taxon>Pentapetalae</taxon>
        <taxon>rosids</taxon>
        <taxon>malvids</taxon>
        <taxon>Brassicales</taxon>
        <taxon>Brassicaceae</taxon>
        <taxon>Brassiceae</taxon>
        <taxon>Brassica</taxon>
    </lineage>
</organism>
<reference key="1">
    <citation type="submission" date="2004-04" db="EMBL/GenBank/DDBJ databases">
        <authorList>
            <person name="Singh A.K."/>
            <person name="Bansal K.C."/>
        </authorList>
    </citation>
    <scope>NUCLEOTIDE SEQUENCE [GENOMIC DNA]</scope>
    <source>
        <strain>cv. Pusa Jaikisan</strain>
    </source>
</reference>
<sequence>MPRSRINGNFIDKTFTIVADILLRVIPTTSGEKEAFTYYRDGMSAQSEGNYAEALQNYYEAMRLEIDPYDRSYILYNIGLIHTSNGEHTKALEYYFRALERNPFLPQAFNNMAVICHYRGEQAIQQGDSEMAEAWFAQAAEYWKQAITLTPGNYIEAQNWLTITRRFE</sequence>
<feature type="chain" id="PRO_0000217794" description="Photosystem I assembly protein Ycf3">
    <location>
        <begin position="1"/>
        <end position="168"/>
    </location>
</feature>
<feature type="repeat" description="TPR 1">
    <location>
        <begin position="35"/>
        <end position="68"/>
    </location>
</feature>
<feature type="repeat" description="TPR 2">
    <location>
        <begin position="72"/>
        <end position="105"/>
    </location>
</feature>
<feature type="repeat" description="TPR 3">
    <location>
        <begin position="120"/>
        <end position="153"/>
    </location>
</feature>
<geneLocation type="chloroplast"/>
<keyword id="KW-0150">Chloroplast</keyword>
<keyword id="KW-0472">Membrane</keyword>
<keyword id="KW-0602">Photosynthesis</keyword>
<keyword id="KW-0934">Plastid</keyword>
<keyword id="KW-0677">Repeat</keyword>
<keyword id="KW-0793">Thylakoid</keyword>
<keyword id="KW-0802">TPR repeat</keyword>
<protein>
    <recommendedName>
        <fullName evidence="1">Photosystem I assembly protein Ycf3</fullName>
    </recommendedName>
</protein>